<reference key="1">
    <citation type="journal article" date="2002" name="J. Bacteriol.">
        <title>Genome sequence and analysis of the oral bacterium Fusobacterium nucleatum strain ATCC 25586.</title>
        <authorList>
            <person name="Kapatral V."/>
            <person name="Anderson I."/>
            <person name="Ivanova N."/>
            <person name="Reznik G."/>
            <person name="Los T."/>
            <person name="Lykidis A."/>
            <person name="Bhattacharyya A."/>
            <person name="Bartman A."/>
            <person name="Gardner W."/>
            <person name="Grechkin G."/>
            <person name="Zhu L."/>
            <person name="Vasieva O."/>
            <person name="Chu L."/>
            <person name="Kogan Y."/>
            <person name="Chaga O."/>
            <person name="Goltsman E."/>
            <person name="Bernal A."/>
            <person name="Larsen N."/>
            <person name="D'Souza M."/>
            <person name="Walunas T."/>
            <person name="Pusch G."/>
            <person name="Haselkorn R."/>
            <person name="Fonstein M."/>
            <person name="Kyrpides N.C."/>
            <person name="Overbeek R."/>
        </authorList>
    </citation>
    <scope>NUCLEOTIDE SEQUENCE [LARGE SCALE GENOMIC DNA]</scope>
    <source>
        <strain>ATCC 25586 / DSM 15643 / BCRC 10681 / CIP 101130 / JCM 8532 / KCTC 2640 / LMG 13131 / VPI 4355</strain>
    </source>
</reference>
<proteinExistence type="inferred from homology"/>
<dbReference type="EMBL" id="AE009951">
    <property type="protein sequence ID" value="AAL93740.1"/>
    <property type="molecule type" value="Genomic_DNA"/>
</dbReference>
<dbReference type="RefSeq" id="NP_602441.1">
    <property type="nucleotide sequence ID" value="NC_003454.1"/>
</dbReference>
<dbReference type="RefSeq" id="WP_005899800.1">
    <property type="nucleotide sequence ID" value="NZ_OZ209243.1"/>
</dbReference>
<dbReference type="SMR" id="Q8RIH5"/>
<dbReference type="FunCoup" id="Q8RIH5">
    <property type="interactions" value="400"/>
</dbReference>
<dbReference type="STRING" id="190304.FN1625"/>
<dbReference type="PaxDb" id="190304-FN1625"/>
<dbReference type="EnsemblBacteria" id="AAL93740">
    <property type="protein sequence ID" value="AAL93740"/>
    <property type="gene ID" value="FN1625"/>
</dbReference>
<dbReference type="GeneID" id="79782564"/>
<dbReference type="KEGG" id="fnu:FN1625"/>
<dbReference type="PATRIC" id="fig|190304.8.peg.118"/>
<dbReference type="eggNOG" id="COG0200">
    <property type="taxonomic scope" value="Bacteria"/>
</dbReference>
<dbReference type="HOGENOM" id="CLU_055188_4_2_0"/>
<dbReference type="InParanoid" id="Q8RIH5"/>
<dbReference type="BioCyc" id="FNUC190304:G1FZS-128-MONOMER"/>
<dbReference type="Proteomes" id="UP000002521">
    <property type="component" value="Chromosome"/>
</dbReference>
<dbReference type="GO" id="GO:0022625">
    <property type="term" value="C:cytosolic large ribosomal subunit"/>
    <property type="evidence" value="ECO:0000318"/>
    <property type="project" value="GO_Central"/>
</dbReference>
<dbReference type="GO" id="GO:0019843">
    <property type="term" value="F:rRNA binding"/>
    <property type="evidence" value="ECO:0007669"/>
    <property type="project" value="UniProtKB-UniRule"/>
</dbReference>
<dbReference type="GO" id="GO:0003735">
    <property type="term" value="F:structural constituent of ribosome"/>
    <property type="evidence" value="ECO:0000318"/>
    <property type="project" value="GO_Central"/>
</dbReference>
<dbReference type="GO" id="GO:0006412">
    <property type="term" value="P:translation"/>
    <property type="evidence" value="ECO:0007669"/>
    <property type="project" value="UniProtKB-UniRule"/>
</dbReference>
<dbReference type="Gene3D" id="3.100.10.10">
    <property type="match status" value="1"/>
</dbReference>
<dbReference type="HAMAP" id="MF_01341">
    <property type="entry name" value="Ribosomal_uL15"/>
    <property type="match status" value="1"/>
</dbReference>
<dbReference type="InterPro" id="IPR030878">
    <property type="entry name" value="Ribosomal_uL15"/>
</dbReference>
<dbReference type="InterPro" id="IPR021131">
    <property type="entry name" value="Ribosomal_uL15/eL18"/>
</dbReference>
<dbReference type="InterPro" id="IPR036227">
    <property type="entry name" value="Ribosomal_uL15/eL18_sf"/>
</dbReference>
<dbReference type="InterPro" id="IPR005749">
    <property type="entry name" value="Ribosomal_uL15_bac-type"/>
</dbReference>
<dbReference type="InterPro" id="IPR001196">
    <property type="entry name" value="Ribosomal_uL15_CS"/>
</dbReference>
<dbReference type="NCBIfam" id="TIGR01071">
    <property type="entry name" value="rplO_bact"/>
    <property type="match status" value="1"/>
</dbReference>
<dbReference type="PANTHER" id="PTHR12934">
    <property type="entry name" value="50S RIBOSOMAL PROTEIN L15"/>
    <property type="match status" value="1"/>
</dbReference>
<dbReference type="PANTHER" id="PTHR12934:SF11">
    <property type="entry name" value="LARGE RIBOSOMAL SUBUNIT PROTEIN UL15M"/>
    <property type="match status" value="1"/>
</dbReference>
<dbReference type="Pfam" id="PF00828">
    <property type="entry name" value="Ribosomal_L27A"/>
    <property type="match status" value="1"/>
</dbReference>
<dbReference type="SUPFAM" id="SSF52080">
    <property type="entry name" value="Ribosomal proteins L15p and L18e"/>
    <property type="match status" value="1"/>
</dbReference>
<dbReference type="PROSITE" id="PS00475">
    <property type="entry name" value="RIBOSOMAL_L15"/>
    <property type="match status" value="1"/>
</dbReference>
<name>RL15_FUSNN</name>
<accession>Q8RIH5</accession>
<evidence type="ECO:0000255" key="1">
    <source>
        <dbReference type="HAMAP-Rule" id="MF_01341"/>
    </source>
</evidence>
<evidence type="ECO:0000256" key="2">
    <source>
        <dbReference type="SAM" id="MobiDB-lite"/>
    </source>
</evidence>
<evidence type="ECO:0000305" key="3"/>
<feature type="chain" id="PRO_0000104725" description="Large ribosomal subunit protein uL15">
    <location>
        <begin position="1"/>
        <end position="159"/>
    </location>
</feature>
<feature type="region of interest" description="Disordered" evidence="2">
    <location>
        <begin position="1"/>
        <end position="46"/>
    </location>
</feature>
<feature type="compositionally biased region" description="Gly residues" evidence="2">
    <location>
        <begin position="22"/>
        <end position="34"/>
    </location>
</feature>
<organism>
    <name type="scientific">Fusobacterium nucleatum subsp. nucleatum (strain ATCC 25586 / DSM 15643 / BCRC 10681 / CIP 101130 / JCM 8532 / KCTC 2640 / LMG 13131 / VPI 4355)</name>
    <dbReference type="NCBI Taxonomy" id="190304"/>
    <lineage>
        <taxon>Bacteria</taxon>
        <taxon>Fusobacteriati</taxon>
        <taxon>Fusobacteriota</taxon>
        <taxon>Fusobacteriia</taxon>
        <taxon>Fusobacteriales</taxon>
        <taxon>Fusobacteriaceae</taxon>
        <taxon>Fusobacterium</taxon>
    </lineage>
</organism>
<comment type="function">
    <text evidence="1">Binds to the 23S rRNA.</text>
</comment>
<comment type="subunit">
    <text evidence="1">Part of the 50S ribosomal subunit.</text>
</comment>
<comment type="similarity">
    <text evidence="1">Belongs to the universal ribosomal protein uL15 family.</text>
</comment>
<gene>
    <name evidence="1" type="primary">rplO</name>
    <name type="ordered locus">FN1625</name>
</gene>
<keyword id="KW-1185">Reference proteome</keyword>
<keyword id="KW-0687">Ribonucleoprotein</keyword>
<keyword id="KW-0689">Ribosomal protein</keyword>
<keyword id="KW-0694">RNA-binding</keyword>
<keyword id="KW-0699">rRNA-binding</keyword>
<protein>
    <recommendedName>
        <fullName evidence="1">Large ribosomal subunit protein uL15</fullName>
    </recommendedName>
    <alternativeName>
        <fullName evidence="3">50S ribosomal protein L15</fullName>
    </alternativeName>
</protein>
<sequence length="159" mass="17344">MKLNELSPSVPKKNRKRIGRGNSSGWGKTAGKGSNGQNSRAGGGVKPYFEGGQMPIYRRVPKRGFSNAIFKKEYTVISLAFLNENFEDGEEVSLETLFNKCLIKKGRDGVKVLGNGELNKKLTVKVHKISKSAKAAVEAKGGTVELVEVKGFERAETNK</sequence>